<sequence length="2255" mass="255941">MAGSREILLPEVHLNSPIVKHKLYYYILLGNLPNEIDLDDLGPLHNQNWNQIAHEESNLAQRLVNVRNFLITHIPDLRKGHWQEYVNVILWPRILKLLPDFKINDQLPLLKNWDKLVKESCSVINAGTSQCIQNLSYGLTGRGNLFTRSRELSGDRRDIDLKTVVAAWHDSDWKRISDFWIMIKFQMRQLIVRQTDHNDPDLITYIENREGIIIITPELVALFNTENHTLTYMTFEIVLMVSDMYEGRHNILSLCTVSTYLNPLKKRITYLLSLVDNLAFQIGDAVYNIIALLESFVYAQLQMSDPIPELRGQFHAFVCSEILDALRGTNSFTQDELRTVTTNLISPFQDLTPDLTAELLCIMRLWGHPMLTASQAAGKVRESMCAGKVLDFPTIMKTLAFFHTILINGYRRKHHGVWPPLNLPGNASKGLTELMNDNTEISYEFTLKHWKEVSLIKFKKCFDADAGEELSIFMKDKAISAPKQDWMSVFRRSLIKQRHQHHQVPLPNPFNRRLLLNFLGDDKFDPSVELQYVTSGEYLHDDTFCASYSLKEKEIKPDGRIFAKLTKRMRSCQVIAESLLANHAGLLMKENGVVMNQLSLTKSLLTMSQIGIISEKARKSTRDNINQPGFQNIQRNKSHHSKQVNQRDPSDDFELAASFLTTDLKKYCLQWRYQTIIPFAQSLNRMYGYPHLFEWIHLRLMRSTLYVGDPFNPPADTSQFDLDKVINGDIFIVSPRGGIEGLCQKAWTMISIAVIILSATESGTRVMSMVQGDNQAIAVTTRVPRSLPTLEKKTIAFRSCNLFFERLKCNNFGLGHHLKEQETIISSHFFVYSKRIFYQGRILTQALKNASKLCLTADVLGECTQSSCSNLATTVMRLTENGVEKDICFYLNIYMTIKQLSYDIIFPQVSIPGDQITLEYINNPHLVSRLALLPSQLGGLNYLSCSRLFNRNIGDPVVSAVADLKRLIKSGCMDYWILYNLLGRKPGNGSWATLAADPYSINIEYQYPPTTALKRHTQQALMELSTNPMLRGIFSDNAQAEENNLARFLLDREVIFPRVAHIIIEQTSVGRRKQIQGYLDSTRSIMRKSLEIKPLSNRKLNEILDYNINYLAYNLALLKNAIEPPTYLKAMTLETCSIDIARNLRKLSWAPLLGGRNLEGLETPDPIEITAGALIVGSGYCEQCAAGDNRFTWFFLPSGIEIGGDPRDNPPIRVPYIGSRTDERRVASMAYIRGASSSLKAVLRLAGVYIWAFGDTLENWIDALDLSHTRVNITLEQLQSLTPLPTSANLTHRLDDGTTTLKFTPASSYTFSSFTHISNDEQYLTINDKTADSNIIYQQLMITGLGILETWNNPPVNRTFEESTLHLHTGASCCVRPVDSCIISEALTVKPHITVPYSNKFVFDEDPLSEYETAKLESLSFQAQLGNIDAVDMTGKLTLLSQFTARQIINAITGLDESVSLTNDAIVASDYVSNWISECMYTKLDELFMYCGWELLLELSYQMYYLRVVGWSNIVDYSYMILRRIPGAALNNLASTLSHPKLFRRAINLDIVAPLNAPHFASLDYIKMSVDAILWGCKRVINVLSNGGDLELVVTSEDSLILSDRSMNLIARKLTLLSLIHHNGLELPKIKGFSPDEKCFALTEFLRKVVNSGLSSIENLSNFMYNVENPRLAAFASNNYYLTRKLLNSIRDTESGQVAVTSYYESLEYIDSLKLTPHVPGTSCIEDDSLCTNDYIIWIIESNANLEKYPIPNSPEDDSNFHNFKLNAPSHHTLRPLGLSSTAWYKGISCCRYLERLKLPQGDHLYIAEGSGASMTIIEYLFPGRKIYYNSLFSSGDNPPQRNYAPMPTQFIESVPYKLWQAHTDQYPEIFEDFIPLWNGNATMTDIGMTACVEFIINRVGPRTCSLVHVDLESSASLNQQCLSKPIINAIITATTVLCPHGVLILKYSWLPFTRFSTLITFLWCYFERITVLRSTYSDPANHEVYLICILANNFAFQTVSQATGMAMTLTDQGFTLISPERINQYWDGHLKQERIVAEAIDKVVLGENALFNSSDNELILKCGGTPNARNLIDIEPVATFIEFEQLICTMLTTHLKEIIDITRSGTQDYESLLLTPYNLGLLGKISTIVRLLTERILNHTIRNWLILPPSLRMIVKQDLEFGIFRITSILNSDRFLKLSPNRKYLIAQLTAGYIRKLIEGDCNIDLTRPIQKQIWKALGCVVYCHDPMDQRESTEFIDININEEIDRGIDGEEI</sequence>
<evidence type="ECO:0000250" key="1"/>
<evidence type="ECO:0000250" key="2">
    <source>
        <dbReference type="UniProtKB" id="P03523"/>
    </source>
</evidence>
<evidence type="ECO:0000250" key="3">
    <source>
        <dbReference type="UniProtKB" id="P28887"/>
    </source>
</evidence>
<evidence type="ECO:0000255" key="4"/>
<evidence type="ECO:0000255" key="5">
    <source>
        <dbReference type="PROSITE-ProRule" id="PRU00539"/>
    </source>
</evidence>
<evidence type="ECO:0000255" key="6">
    <source>
        <dbReference type="PROSITE-ProRule" id="PRU00923"/>
    </source>
</evidence>
<evidence type="ECO:0000256" key="7">
    <source>
        <dbReference type="SAM" id="MobiDB-lite"/>
    </source>
</evidence>
<evidence type="ECO:0000305" key="8"/>
<protein>
    <recommendedName>
        <fullName>RNA-directed RNA polymerase L</fullName>
        <shortName>Protein L</shortName>
    </recommendedName>
    <alternativeName>
        <fullName>Large structural protein</fullName>
    </alternativeName>
    <alternativeName>
        <fullName>Replicase</fullName>
    </alternativeName>
    <alternativeName>
        <fullName>Transcriptase</fullName>
    </alternativeName>
    <domain>
        <recommendedName>
            <fullName>RNA-directed RNA polymerase</fullName>
            <ecNumber evidence="3">2.7.7.48</ecNumber>
        </recommendedName>
    </domain>
    <domain>
        <recommendedName>
            <fullName evidence="2">GTP phosphohydrolase</fullName>
            <ecNumber evidence="2">3.6.1.-</ecNumber>
        </recommendedName>
    </domain>
    <domain>
        <recommendedName>
            <fullName evidence="8">GDP polyribonucleotidyltransferase</fullName>
            <ecNumber evidence="2">2.7.7.88</ecNumber>
        </recommendedName>
        <alternativeName>
            <fullName evidence="8">PRNTase</fullName>
        </alternativeName>
    </domain>
    <domain>
        <recommendedName>
            <fullName evidence="8">mRNA cap methyltransferase</fullName>
            <ecNumber evidence="2">2.1.1.375</ecNumber>
        </recommendedName>
        <alternativeName>
            <fullName evidence="2">mRNA (guanine-N(7)-)-methyltransferase</fullName>
            <shortName evidence="2">G-N7-MTase</shortName>
        </alternativeName>
        <alternativeName>
            <fullName evidence="2">mRNA (nucleoside-2'-O-)-methyltransferase</fullName>
            <shortName evidence="2">N1-2'-O-MTase</shortName>
        </alternativeName>
    </domain>
</protein>
<organismHost>
    <name type="scientific">Canis lupus familiaris</name>
    <name type="common">Dog</name>
    <name type="synonym">Canis familiaris</name>
    <dbReference type="NCBI Taxonomy" id="9615"/>
</organismHost>
<organismHost>
    <name type="scientific">Homo sapiens</name>
    <name type="common">Human</name>
    <dbReference type="NCBI Taxonomy" id="9606"/>
</organismHost>
<organismHost>
    <name type="scientific">Macaca fascicularis</name>
    <name type="common">Crab-eating macaque</name>
    <name type="synonym">Cynomolgus monkey</name>
    <dbReference type="NCBI Taxonomy" id="9541"/>
</organismHost>
<organismHost>
    <name type="scientific">Macaca mulatta</name>
    <name type="common">Rhesus macaque</name>
    <dbReference type="NCBI Taxonomy" id="9544"/>
</organismHost>
<dbReference type="EC" id="2.7.7.48" evidence="3"/>
<dbReference type="EC" id="3.6.1.-" evidence="2"/>
<dbReference type="EC" id="2.7.7.88" evidence="2"/>
<dbReference type="EC" id="2.1.1.375" evidence="2"/>
<dbReference type="EMBL" id="D13868">
    <property type="protein sequence ID" value="BAA02981.1"/>
    <property type="molecule type" value="Genomic_RNA"/>
</dbReference>
<dbReference type="PIR" id="JQ1532">
    <property type="entry name" value="JQ1532"/>
</dbReference>
<dbReference type="SMR" id="Q03396"/>
<dbReference type="GO" id="GO:0030430">
    <property type="term" value="C:host cell cytoplasm"/>
    <property type="evidence" value="ECO:0007669"/>
    <property type="project" value="UniProtKB-SubCell"/>
</dbReference>
<dbReference type="GO" id="GO:0044423">
    <property type="term" value="C:virion component"/>
    <property type="evidence" value="ECO:0007669"/>
    <property type="project" value="UniProtKB-KW"/>
</dbReference>
<dbReference type="GO" id="GO:0005524">
    <property type="term" value="F:ATP binding"/>
    <property type="evidence" value="ECO:0007669"/>
    <property type="project" value="UniProtKB-KW"/>
</dbReference>
<dbReference type="GO" id="GO:0003924">
    <property type="term" value="F:GTPase activity"/>
    <property type="evidence" value="ECO:0007669"/>
    <property type="project" value="RHEA"/>
</dbReference>
<dbReference type="GO" id="GO:0004482">
    <property type="term" value="F:mRNA 5'-cap (guanine-N7-)-methyltransferase activity"/>
    <property type="evidence" value="ECO:0007669"/>
    <property type="project" value="InterPro"/>
</dbReference>
<dbReference type="GO" id="GO:0003968">
    <property type="term" value="F:RNA-directed RNA polymerase activity"/>
    <property type="evidence" value="ECO:0007669"/>
    <property type="project" value="UniProtKB-KW"/>
</dbReference>
<dbReference type="Gene3D" id="3.40.50.12760">
    <property type="match status" value="1"/>
</dbReference>
<dbReference type="InterPro" id="IPR039736">
    <property type="entry name" value="L_poly_C"/>
</dbReference>
<dbReference type="InterPro" id="IPR026890">
    <property type="entry name" value="Mononeg_mRNAcap"/>
</dbReference>
<dbReference type="InterPro" id="IPR014023">
    <property type="entry name" value="Mononeg_RNA_pol_cat"/>
</dbReference>
<dbReference type="InterPro" id="IPR025786">
    <property type="entry name" value="Mononega_L_MeTrfase"/>
</dbReference>
<dbReference type="InterPro" id="IPR016269">
    <property type="entry name" value="RNA-dir_pol_paramyxovirus"/>
</dbReference>
<dbReference type="NCBIfam" id="TIGR04198">
    <property type="entry name" value="paramyx_RNAcap"/>
    <property type="match status" value="1"/>
</dbReference>
<dbReference type="Pfam" id="PF14318">
    <property type="entry name" value="Mononeg_mRNAcap"/>
    <property type="match status" value="1"/>
</dbReference>
<dbReference type="Pfam" id="PF00946">
    <property type="entry name" value="Mononeg_RNA_pol"/>
    <property type="match status" value="1"/>
</dbReference>
<dbReference type="PIRSF" id="PIRSF000830">
    <property type="entry name" value="RNA_pol_ParamyxoV"/>
    <property type="match status" value="1"/>
</dbReference>
<dbReference type="PROSITE" id="PS50526">
    <property type="entry name" value="RDRP_SSRNA_NEG_NONSEG"/>
    <property type="match status" value="1"/>
</dbReference>
<dbReference type="PROSITE" id="PS51590">
    <property type="entry name" value="SAM_MT_MNV_L"/>
    <property type="match status" value="1"/>
</dbReference>
<comment type="function">
    <text evidence="2">RNA-directed RNA polymerase that catalyzes the transcription of viral mRNAs, their capping and polyadenylation. The template is composed of the viral RNA tightly encapsidated by the nucleoprotein (N). The viral polymerase binds to the genomic RNA at the 3' leader promoter, and transcribes subsequently all viral mRNAs with a decreasing efficiency. The first gene is the most transcribed, and the last the least transcribed. The viral phosphoprotein acts as a processivity factor. Capping is concomitant with initiation of mRNA transcription. Indeed, a GDP polyribonucleotidyl transferase (PRNTase) adds the cap structure when the nascent RNA chain length has reached few nucleotides. Ribose 2'-O methylation of viral mRNA cap precedes and facilitates subsequent guanine-N-7 methylation, both activities being carried by the viral polymerase. Polyadenylation of mRNAs occur by a stuttering mechanism at a slipery stop site present at the end viral genes. After finishing transcription of a mRNA, the polymerase can resume transcription of the downstream gene.</text>
</comment>
<comment type="function">
    <text evidence="2">RNA-directed RNA polymerase that catalyzes the replication of viral genomic RNA. The template is composed of the viral RNA tightly encapsidated by the nucleoprotein (N). The replicase mode is dependent on intracellular N protein concentration. In this mode, the polymerase replicates the whole viral genome without recognizing transcriptional signals, and the replicated genome is not caped or polyadenylated.</text>
</comment>
<comment type="catalytic activity">
    <reaction evidence="5">
        <text>RNA(n) + a ribonucleoside 5'-triphosphate = RNA(n+1) + diphosphate</text>
        <dbReference type="Rhea" id="RHEA:21248"/>
        <dbReference type="Rhea" id="RHEA-COMP:14527"/>
        <dbReference type="Rhea" id="RHEA-COMP:17342"/>
        <dbReference type="ChEBI" id="CHEBI:33019"/>
        <dbReference type="ChEBI" id="CHEBI:61557"/>
        <dbReference type="ChEBI" id="CHEBI:140395"/>
        <dbReference type="EC" id="2.7.7.48"/>
    </reaction>
</comment>
<comment type="catalytic activity">
    <reaction evidence="2">
        <text>a 5'-end (5'-triphosphoguanosine)-adenylyl-adenylyl-cytidylyl-adenosine in mRNA + 2 S-adenosyl-L-methionine = a 5'-end (N(7)-methyl 5'-triphosphoguanosine)-(2'-O-methyladenylyl)-adenylyl-cytidylyl-adenosine in mRNA + 2 S-adenosyl-L-homocysteine + H(+)</text>
        <dbReference type="Rhea" id="RHEA:65376"/>
        <dbReference type="Rhea" id="RHEA-COMP:16797"/>
        <dbReference type="Rhea" id="RHEA-COMP:16798"/>
        <dbReference type="ChEBI" id="CHEBI:15378"/>
        <dbReference type="ChEBI" id="CHEBI:57856"/>
        <dbReference type="ChEBI" id="CHEBI:59789"/>
        <dbReference type="ChEBI" id="CHEBI:156483"/>
        <dbReference type="ChEBI" id="CHEBI:156484"/>
        <dbReference type="EC" id="2.1.1.375"/>
    </reaction>
</comment>
<comment type="catalytic activity">
    <reaction evidence="2">
        <text>a 5'-end (5'-triphosphoguanosine)-adenylyl-adenylyl-cytidylyl-adenosine in mRNA + S-adenosyl-L-methionine = a 5'-end (5'-triphosphoguanosine)-(2'-O-methyladenylyl)-adenylyl-cytidylyl-adenosine in mRNA + S-adenosyl-L-homocysteine + H(+)</text>
        <dbReference type="Rhea" id="RHEA:65380"/>
        <dbReference type="Rhea" id="RHEA-COMP:16797"/>
        <dbReference type="Rhea" id="RHEA-COMP:16801"/>
        <dbReference type="ChEBI" id="CHEBI:15378"/>
        <dbReference type="ChEBI" id="CHEBI:57856"/>
        <dbReference type="ChEBI" id="CHEBI:59789"/>
        <dbReference type="ChEBI" id="CHEBI:156482"/>
        <dbReference type="ChEBI" id="CHEBI:156484"/>
    </reaction>
</comment>
<comment type="catalytic activity">
    <reaction evidence="3">
        <text>a 5'-end triphospho-adenylyl-adenylyl-cytidylyl-adenosine in mRNA + GDP + H(+) = a 5'-end (5'-triphosphoguanosine)-adenylyl-adenylyl-cytidylyl-adenosine in mRNA + diphosphate</text>
        <dbReference type="Rhea" id="RHEA:65436"/>
        <dbReference type="Rhea" id="RHEA-COMP:16797"/>
        <dbReference type="Rhea" id="RHEA-COMP:16799"/>
        <dbReference type="ChEBI" id="CHEBI:15378"/>
        <dbReference type="ChEBI" id="CHEBI:33019"/>
        <dbReference type="ChEBI" id="CHEBI:58189"/>
        <dbReference type="ChEBI" id="CHEBI:156484"/>
        <dbReference type="ChEBI" id="CHEBI:156503"/>
        <dbReference type="EC" id="2.7.7.88"/>
    </reaction>
</comment>
<comment type="catalytic activity">
    <reaction evidence="2">
        <text>a 5'-end (5'-triphosphoguanosine)-(2'-O-methyladenylyl)-adenylyl-cytidylyl-adenosine in mRNA + S-adenosyl-L-methionine = a 5'-end (N(7)-methyl 5'-triphosphoguanosine)-(2'-O-methyladenylyl)-adenylyl-cytidylyl-adenosine in mRNA + S-adenosyl-L-homocysteine</text>
        <dbReference type="Rhea" id="RHEA:65440"/>
        <dbReference type="Rhea" id="RHEA-COMP:16798"/>
        <dbReference type="Rhea" id="RHEA-COMP:16801"/>
        <dbReference type="ChEBI" id="CHEBI:57856"/>
        <dbReference type="ChEBI" id="CHEBI:59789"/>
        <dbReference type="ChEBI" id="CHEBI:156482"/>
        <dbReference type="ChEBI" id="CHEBI:156483"/>
    </reaction>
</comment>
<comment type="catalytic activity">
    <reaction evidence="3">
        <text>GTP + H2O = GDP + phosphate + H(+)</text>
        <dbReference type="Rhea" id="RHEA:19669"/>
        <dbReference type="ChEBI" id="CHEBI:15377"/>
        <dbReference type="ChEBI" id="CHEBI:15378"/>
        <dbReference type="ChEBI" id="CHEBI:37565"/>
        <dbReference type="ChEBI" id="CHEBI:43474"/>
        <dbReference type="ChEBI" id="CHEBI:58189"/>
    </reaction>
</comment>
<comment type="subunit">
    <text evidence="1">Interacts with the P protein.</text>
</comment>
<comment type="subcellular location">
    <subcellularLocation>
        <location evidence="8">Virion</location>
    </subcellularLocation>
    <subcellularLocation>
        <location evidence="1">Host cytoplasm</location>
    </subcellularLocation>
</comment>
<comment type="similarity">
    <text evidence="8">Belongs to the paramyxovirus L protein family.</text>
</comment>
<keyword id="KW-0067">ATP-binding</keyword>
<keyword id="KW-1035">Host cytoplasm</keyword>
<keyword id="KW-0378">Hydrolase</keyword>
<keyword id="KW-0489">Methyltransferase</keyword>
<keyword id="KW-0506">mRNA capping</keyword>
<keyword id="KW-0507">mRNA processing</keyword>
<keyword id="KW-0511">Multifunctional enzyme</keyword>
<keyword id="KW-0547">Nucleotide-binding</keyword>
<keyword id="KW-0548">Nucleotidyltransferase</keyword>
<keyword id="KW-0696">RNA-directed RNA polymerase</keyword>
<keyword id="KW-0949">S-adenosyl-L-methionine</keyword>
<keyword id="KW-0808">Transferase</keyword>
<keyword id="KW-0693">Viral RNA replication</keyword>
<keyword id="KW-0946">Virion</keyword>
<name>L_PIV5W</name>
<organism>
    <name type="scientific">Parainfluenza virus 5 (strain 21004-WR)</name>
    <name type="common">PIV5</name>
    <name type="synonym">Simian virus 5</name>
    <dbReference type="NCBI Taxonomy" id="33730"/>
    <lineage>
        <taxon>Viruses</taxon>
        <taxon>Riboviria</taxon>
        <taxon>Orthornavirae</taxon>
        <taxon>Negarnaviricota</taxon>
        <taxon>Haploviricotina</taxon>
        <taxon>Monjiviricetes</taxon>
        <taxon>Mononegavirales</taxon>
        <taxon>Paramyxoviridae</taxon>
        <taxon>Rubulavirinae</taxon>
        <taxon>Orthorubulavirus</taxon>
        <taxon>Orthorubulavirus mammalis</taxon>
        <taxon>Mammalian orthorubulavirus 5</taxon>
    </lineage>
</organism>
<accession>Q03396</accession>
<gene>
    <name type="primary">L</name>
</gene>
<proteinExistence type="inferred from homology"/>
<feature type="chain" id="PRO_0000142743" description="RNA-directed RNA polymerase L">
    <location>
        <begin position="1"/>
        <end position="2255"/>
    </location>
</feature>
<feature type="domain" description="RdRp catalytic" evidence="5">
    <location>
        <begin position="656"/>
        <end position="840"/>
    </location>
</feature>
<feature type="domain" description="Mononegavirus-type SAM-dependent 2'-O-MTase" evidence="6">
    <location>
        <begin position="1775"/>
        <end position="1988"/>
    </location>
</feature>
<feature type="region of interest" description="Disordered" evidence="7">
    <location>
        <begin position="623"/>
        <end position="649"/>
    </location>
</feature>
<feature type="compositionally biased region" description="Polar residues" evidence="7">
    <location>
        <begin position="623"/>
        <end position="635"/>
    </location>
</feature>
<feature type="binding site" evidence="4">
    <location>
        <begin position="1805"/>
        <end position="1814"/>
    </location>
    <ligand>
        <name>ATP</name>
        <dbReference type="ChEBI" id="CHEBI:30616"/>
    </ligand>
</feature>
<reference key="1">
    <citation type="journal article" date="1992" name="J. Gen. Virol.">
        <title>Sequence analysis of the large (L) protein of simian virus 5.</title>
        <authorList>
            <person name="Higuchi Y."/>
            <person name="Miyahara Y."/>
            <person name="Kawano M."/>
            <person name="Tsurudome M."/>
            <person name="Matsumura H."/>
            <person name="Kusagawa S."/>
            <person name="Komada H."/>
            <person name="Nishio M."/>
            <person name="Ito Y."/>
        </authorList>
    </citation>
    <scope>NUCLEOTIDE SEQUENCE [GENOMIC RNA]</scope>
</reference>